<gene>
    <name evidence="1" type="primary">guaC</name>
    <name type="ordered locus">SAV1337</name>
</gene>
<name>GUAC_STAAM</name>
<reference key="1">
    <citation type="journal article" date="2001" name="Lancet">
        <title>Whole genome sequencing of meticillin-resistant Staphylococcus aureus.</title>
        <authorList>
            <person name="Kuroda M."/>
            <person name="Ohta T."/>
            <person name="Uchiyama I."/>
            <person name="Baba T."/>
            <person name="Yuzawa H."/>
            <person name="Kobayashi I."/>
            <person name="Cui L."/>
            <person name="Oguchi A."/>
            <person name="Aoki K."/>
            <person name="Nagai Y."/>
            <person name="Lian J.-Q."/>
            <person name="Ito T."/>
            <person name="Kanamori M."/>
            <person name="Matsumaru H."/>
            <person name="Maruyama A."/>
            <person name="Murakami H."/>
            <person name="Hosoyama A."/>
            <person name="Mizutani-Ui Y."/>
            <person name="Takahashi N.K."/>
            <person name="Sawano T."/>
            <person name="Inoue R."/>
            <person name="Kaito C."/>
            <person name="Sekimizu K."/>
            <person name="Hirakawa H."/>
            <person name="Kuhara S."/>
            <person name="Goto S."/>
            <person name="Yabuzaki J."/>
            <person name="Kanehisa M."/>
            <person name="Yamashita A."/>
            <person name="Oshima K."/>
            <person name="Furuya K."/>
            <person name="Yoshino C."/>
            <person name="Shiba T."/>
            <person name="Hattori M."/>
            <person name="Ogasawara N."/>
            <person name="Hayashi H."/>
            <person name="Hiramatsu K."/>
        </authorList>
    </citation>
    <scope>NUCLEOTIDE SEQUENCE [LARGE SCALE GENOMIC DNA]</scope>
    <source>
        <strain>Mu50 / ATCC 700699</strain>
    </source>
</reference>
<accession>P60562</accession>
<accession>Q99UD9</accession>
<proteinExistence type="inferred from homology"/>
<protein>
    <recommendedName>
        <fullName evidence="1">GMP reductase</fullName>
        <ecNumber evidence="1">1.7.1.7</ecNumber>
    </recommendedName>
    <alternativeName>
        <fullName evidence="1">Guanosine 5'-monophosphate oxidoreductase</fullName>
        <shortName evidence="1">Guanosine monophosphate reductase</shortName>
    </alternativeName>
</protein>
<evidence type="ECO:0000255" key="1">
    <source>
        <dbReference type="HAMAP-Rule" id="MF_01511"/>
    </source>
</evidence>
<dbReference type="EC" id="1.7.1.7" evidence="1"/>
<dbReference type="EMBL" id="BA000017">
    <property type="protein sequence ID" value="BAB57499.1"/>
    <property type="molecule type" value="Genomic_DNA"/>
</dbReference>
<dbReference type="RefSeq" id="WP_000688122.1">
    <property type="nucleotide sequence ID" value="NC_002758.2"/>
</dbReference>
<dbReference type="SMR" id="P60562"/>
<dbReference type="KEGG" id="sav:SAV1337"/>
<dbReference type="HOGENOM" id="CLU_022552_5_0_9"/>
<dbReference type="PhylomeDB" id="P60562"/>
<dbReference type="Proteomes" id="UP000002481">
    <property type="component" value="Chromosome"/>
</dbReference>
<dbReference type="GO" id="GO:0005829">
    <property type="term" value="C:cytosol"/>
    <property type="evidence" value="ECO:0007669"/>
    <property type="project" value="TreeGrafter"/>
</dbReference>
<dbReference type="GO" id="GO:1902560">
    <property type="term" value="C:GMP reductase complex"/>
    <property type="evidence" value="ECO:0007669"/>
    <property type="project" value="InterPro"/>
</dbReference>
<dbReference type="GO" id="GO:0003920">
    <property type="term" value="F:GMP reductase activity"/>
    <property type="evidence" value="ECO:0007669"/>
    <property type="project" value="UniProtKB-UniRule"/>
</dbReference>
<dbReference type="GO" id="GO:0006163">
    <property type="term" value="P:purine nucleotide metabolic process"/>
    <property type="evidence" value="ECO:0007669"/>
    <property type="project" value="UniProtKB-UniRule"/>
</dbReference>
<dbReference type="CDD" id="cd00381">
    <property type="entry name" value="IMPDH"/>
    <property type="match status" value="1"/>
</dbReference>
<dbReference type="FunFam" id="3.20.20.70:FF:000079">
    <property type="entry name" value="GMP reductase"/>
    <property type="match status" value="1"/>
</dbReference>
<dbReference type="Gene3D" id="3.20.20.70">
    <property type="entry name" value="Aldolase class I"/>
    <property type="match status" value="1"/>
</dbReference>
<dbReference type="HAMAP" id="MF_01511">
    <property type="entry name" value="GMP_reduct_type2"/>
    <property type="match status" value="1"/>
</dbReference>
<dbReference type="InterPro" id="IPR013785">
    <property type="entry name" value="Aldolase_TIM"/>
</dbReference>
<dbReference type="InterPro" id="IPR050139">
    <property type="entry name" value="GMP_reductase"/>
</dbReference>
<dbReference type="InterPro" id="IPR005994">
    <property type="entry name" value="GuaC_type_2"/>
</dbReference>
<dbReference type="InterPro" id="IPR015875">
    <property type="entry name" value="IMP_DH/GMP_Rdtase_CS"/>
</dbReference>
<dbReference type="InterPro" id="IPR001093">
    <property type="entry name" value="IMP_DH_GMPRt"/>
</dbReference>
<dbReference type="NCBIfam" id="TIGR01306">
    <property type="entry name" value="GMP_reduct_2"/>
    <property type="match status" value="1"/>
</dbReference>
<dbReference type="NCBIfam" id="NF003966">
    <property type="entry name" value="PRK05458.1"/>
    <property type="match status" value="1"/>
</dbReference>
<dbReference type="PANTHER" id="PTHR43170">
    <property type="entry name" value="GMP REDUCTASE"/>
    <property type="match status" value="1"/>
</dbReference>
<dbReference type="PANTHER" id="PTHR43170:SF5">
    <property type="entry name" value="GMP REDUCTASE"/>
    <property type="match status" value="1"/>
</dbReference>
<dbReference type="Pfam" id="PF00478">
    <property type="entry name" value="IMPDH"/>
    <property type="match status" value="1"/>
</dbReference>
<dbReference type="PIRSF" id="PIRSF036500">
    <property type="entry name" value="GMP_red_Firmic"/>
    <property type="match status" value="1"/>
</dbReference>
<dbReference type="SMART" id="SM01240">
    <property type="entry name" value="IMPDH"/>
    <property type="match status" value="1"/>
</dbReference>
<dbReference type="SUPFAM" id="SSF51412">
    <property type="entry name" value="Inosine monophosphate dehydrogenase (IMPDH)"/>
    <property type="match status" value="1"/>
</dbReference>
<dbReference type="PROSITE" id="PS00487">
    <property type="entry name" value="IMP_DH_GMP_RED"/>
    <property type="match status" value="1"/>
</dbReference>
<sequence>MKIFDYEDIQLIPNKCIVESRSECDTTIQFGPKKFKLPVVPANMQTVMNEKLAKWFAENDYFYIMHRFDEEARIPFIKHMQNSGLFASISVGVKKAEFDFIEKLAQEKLIPEYITIDIAHGHSDSVINMIKHIKNHIPDSFVIAGNVGTPEGVRELENAGADATKVGIGPGRVCITKIKTGFGTGGWQLAALNICSKAARKPLIADGGIRTHGDIAKSIRFGASMVMIGSLFAAHEESPGETVELDGKQYKEYFGSASEFQKGEHKNVEGKKMFVEHKGSLMDTLKEMQQDLQSSISYAGGKDLKSLRTVDYVIVRNSIFNGDRD</sequence>
<comment type="function">
    <text evidence="1">Catalyzes the irreversible NADPH-dependent deamination of GMP to IMP. It functions in the conversion of nucleobase, nucleoside and nucleotide derivatives of G to A nucleotides, and in maintaining the intracellular balance of A and G nucleotides.</text>
</comment>
<comment type="catalytic activity">
    <reaction evidence="1">
        <text>IMP + NH4(+) + NADP(+) = GMP + NADPH + 2 H(+)</text>
        <dbReference type="Rhea" id="RHEA:17185"/>
        <dbReference type="ChEBI" id="CHEBI:15378"/>
        <dbReference type="ChEBI" id="CHEBI:28938"/>
        <dbReference type="ChEBI" id="CHEBI:57783"/>
        <dbReference type="ChEBI" id="CHEBI:58053"/>
        <dbReference type="ChEBI" id="CHEBI:58115"/>
        <dbReference type="ChEBI" id="CHEBI:58349"/>
        <dbReference type="EC" id="1.7.1.7"/>
    </reaction>
</comment>
<comment type="similarity">
    <text evidence="1">Belongs to the IMPDH/GMPR family. GuaC type 2 subfamily.</text>
</comment>
<organism>
    <name type="scientific">Staphylococcus aureus (strain Mu50 / ATCC 700699)</name>
    <dbReference type="NCBI Taxonomy" id="158878"/>
    <lineage>
        <taxon>Bacteria</taxon>
        <taxon>Bacillati</taxon>
        <taxon>Bacillota</taxon>
        <taxon>Bacilli</taxon>
        <taxon>Bacillales</taxon>
        <taxon>Staphylococcaceae</taxon>
        <taxon>Staphylococcus</taxon>
    </lineage>
</organism>
<keyword id="KW-0521">NADP</keyword>
<keyword id="KW-0560">Oxidoreductase</keyword>
<feature type="chain" id="PRO_0000093766" description="GMP reductase">
    <location>
        <begin position="1"/>
        <end position="325"/>
    </location>
</feature>
<feature type="active site" description="Thioimidate intermediate" evidence="1">
    <location>
        <position position="174"/>
    </location>
</feature>
<feature type="binding site" evidence="1">
    <location>
        <begin position="203"/>
        <end position="226"/>
    </location>
    <ligand>
        <name>NADP(+)</name>
        <dbReference type="ChEBI" id="CHEBI:58349"/>
    </ligand>
</feature>